<comment type="function">
    <text evidence="1">Associates with cyclin G and CDK5. Seems to act as an auxilin homolog that is involved in the uncoating of clathrin-coated vesicles by Hsc70 in non-neuronal cells. Expression oscillates slightly during the cell cycle, peaking at G1. May play a role in clathrin-mediated endocytosis and intracellular trafficking, and in the dynamics of clathrin assembly/disassembly.</text>
</comment>
<comment type="catalytic activity">
    <reaction>
        <text>L-seryl-[protein] + ATP = O-phospho-L-seryl-[protein] + ADP + H(+)</text>
        <dbReference type="Rhea" id="RHEA:17989"/>
        <dbReference type="Rhea" id="RHEA-COMP:9863"/>
        <dbReference type="Rhea" id="RHEA-COMP:11604"/>
        <dbReference type="ChEBI" id="CHEBI:15378"/>
        <dbReference type="ChEBI" id="CHEBI:29999"/>
        <dbReference type="ChEBI" id="CHEBI:30616"/>
        <dbReference type="ChEBI" id="CHEBI:83421"/>
        <dbReference type="ChEBI" id="CHEBI:456216"/>
        <dbReference type="EC" id="2.7.11.1"/>
    </reaction>
</comment>
<comment type="catalytic activity">
    <reaction>
        <text>L-threonyl-[protein] + ATP = O-phospho-L-threonyl-[protein] + ADP + H(+)</text>
        <dbReference type="Rhea" id="RHEA:46608"/>
        <dbReference type="Rhea" id="RHEA-COMP:11060"/>
        <dbReference type="Rhea" id="RHEA-COMP:11605"/>
        <dbReference type="ChEBI" id="CHEBI:15378"/>
        <dbReference type="ChEBI" id="CHEBI:30013"/>
        <dbReference type="ChEBI" id="CHEBI:30616"/>
        <dbReference type="ChEBI" id="CHEBI:61977"/>
        <dbReference type="ChEBI" id="CHEBI:456216"/>
        <dbReference type="EC" id="2.7.11.1"/>
    </reaction>
</comment>
<comment type="subcellular location">
    <subcellularLocation>
        <location evidence="1">Cytoplasm</location>
        <location evidence="1">Perinuclear region</location>
    </subcellularLocation>
    <subcellularLocation>
        <location evidence="1">Golgi apparatus</location>
        <location evidence="1">trans-Golgi network</location>
    </subcellularLocation>
    <subcellularLocation>
        <location evidence="1">Cell junction</location>
        <location evidence="1">Focal adhesion</location>
    </subcellularLocation>
    <subcellularLocation>
        <location evidence="1">Cytoplasmic vesicle</location>
        <location evidence="1">Clathrin-coated vesicle</location>
    </subcellularLocation>
    <text evidence="1">Localizes to the perinuclear area and to the trans-Golgi network. Also seen on the plasma membrane, probably at focal adhesions. Recruitment to clathrin-coated vesicles depends on temporal variations in phosphoinositide composition of clathrin-coated vesicles.</text>
</comment>
<comment type="similarity">
    <text evidence="3">Belongs to the protein kinase superfamily. Ser/Thr protein kinase family.</text>
</comment>
<gene>
    <name evidence="10" type="primary">Gak</name>
</gene>
<sequence length="1305" mass="143703">MSLLQSALDFLAGPGSLGGAAGRDQSDFVGQTVELGELRLRVRRVLAEGGFAFVYEAQDLGSGREYALKRLLSNEEEKNRAIIQEVCFLKKLSGHPNIVQFCSAASIGKEESDTGQAEFLLLTELCKGQLVEFLRRVECKGPLSCDSILKIFYQTCRAVQHMHRQKPPIIHRDLKVENLLLSNQGTIKLCDFGSATTISHYPDYSWSAQKRAMVEEEITRNTTPMYRTPEIVDLYSNFPIGEKQDIWALGCILYLLCFRQHPFEDGAKLRIVNGKYSIPVNDTRYTVFHDLIRGMLKVNPEERLSIAEVVRQLQEIAAARNVNPKAPITELLEQNGGYGNSGPSRAQPPSGGPVNSSGVLALAEYDQPYGGFLDILRGGTERLFTNLKDTSSKVIQSVANYAKGDLDISYITSRIAVMSFPAEGVESAIKNNIEDVRLFLDAKHPGHYAVYNLSPRIYRASKFHNRVTECGWAVRRAPHLHSLYTLCRSMHAWLREDHRNVCVVHCMDGRAASAVAVCAFLCFCRLFSTAEAAVYMFSMKRCPPGIWPSHKRYIEYVCDMVAEEPITPHSKPMLVKSVVMTPVPLFSKQRNGCRPFCEVYVGEERVTTTSQEYDRMKEFKIEDGKAVIPLGITVQGDVLTIIYHARSTLGGRLQAKMASMKMFQIQFHTGFVPRNATTVKFAKYDLDACDIQEKYPDLFQVNLEVEVEPRDRPSRDVPPWENTSLRGLNPKILFSNREEQQDILSKFGKPELPRQPGSTAQYDAEAGSPEAEITESDSPQSSSTDTNHFLHTLDWQEEKDPETGVDNTSPKESQSNLIADGDGSEVSDEEEASCPSEERKPGAGEDTPRLAAGTRQQDLIFDVGMLAAPQEPVQPEEGVDLLGLHSEGDLRPAAPLQASGVQSSNTDLLSSLLEPSDASQVGPPGDLLGGETPLLLASPVSLLGVQSNLQGKVPDTVDPFDQFLLPSSSDTQPCSKPDLFGEFLNSDSVASSTAFPSTHSAPPPSCSTAFLHLGDLPAEPNKVIASSSHPDLLGGWDTWAETALPGPASMPVPEGTLFSSAGHPAPPGPNPSQTKSQNPDPFADLSDLSSSLQGLPAGLPAGSFVGTSATTHKSNSSWQTTRPTAPGTSWPPQAKPAPRASEQLRSHFSVIGAREERGVRAPSFAQKPKVSENDFEDLLPNQGFSKSDKKGPKTMAEMRKQELARDTDPFKLKLLDWIEGKERNIRALLSTLHTVLWDGESRWTPVSMADLVTPEQVKKQYRRAVLVVHPDKATGQPYEQSAKMIFMELNDAWSEFENQGSRPLF</sequence>
<name>GAK_RAT</name>
<protein>
    <recommendedName>
        <fullName evidence="9">Cyclin-G-associated kinase</fullName>
        <ecNumber>2.7.11.1</ecNumber>
    </recommendedName>
    <alternativeName>
        <fullName>DnaJ homolog subfamily C member 26</fullName>
    </alternativeName>
</protein>
<organism>
    <name type="scientific">Rattus norvegicus</name>
    <name type="common">Rat</name>
    <dbReference type="NCBI Taxonomy" id="10116"/>
    <lineage>
        <taxon>Eukaryota</taxon>
        <taxon>Metazoa</taxon>
        <taxon>Chordata</taxon>
        <taxon>Craniata</taxon>
        <taxon>Vertebrata</taxon>
        <taxon>Euteleostomi</taxon>
        <taxon>Mammalia</taxon>
        <taxon>Eutheria</taxon>
        <taxon>Euarchontoglires</taxon>
        <taxon>Glires</taxon>
        <taxon>Rodentia</taxon>
        <taxon>Myomorpha</taxon>
        <taxon>Muroidea</taxon>
        <taxon>Muridae</taxon>
        <taxon>Murinae</taxon>
        <taxon>Rattus</taxon>
    </lineage>
</organism>
<feature type="initiator methionine" description="Removed" evidence="1">
    <location>
        <position position="1"/>
    </location>
</feature>
<feature type="chain" id="PRO_0000085960" description="Cyclin-G-associated kinase">
    <location>
        <begin position="2"/>
        <end position="1305"/>
    </location>
</feature>
<feature type="domain" description="Protein kinase" evidence="3">
    <location>
        <begin position="40"/>
        <end position="315"/>
    </location>
</feature>
<feature type="domain" description="Phosphatase tensin-type" evidence="6">
    <location>
        <begin position="397"/>
        <end position="564"/>
    </location>
</feature>
<feature type="domain" description="C2 tensin-type" evidence="5">
    <location>
        <begin position="570"/>
        <end position="708"/>
    </location>
</feature>
<feature type="domain" description="J" evidence="4">
    <location>
        <begin position="1241"/>
        <end position="1305"/>
    </location>
</feature>
<feature type="region of interest" description="Disordered" evidence="8">
    <location>
        <begin position="332"/>
        <end position="354"/>
    </location>
</feature>
<feature type="region of interest" description="Disordered" evidence="8">
    <location>
        <begin position="747"/>
        <end position="856"/>
    </location>
</feature>
<feature type="region of interest" description="Disordered" evidence="8">
    <location>
        <begin position="1044"/>
        <end position="1141"/>
    </location>
</feature>
<feature type="compositionally biased region" description="Polar residues" evidence="8">
    <location>
        <begin position="776"/>
        <end position="789"/>
    </location>
</feature>
<feature type="compositionally biased region" description="Polar residues" evidence="8">
    <location>
        <begin position="805"/>
        <end position="817"/>
    </location>
</feature>
<feature type="compositionally biased region" description="Acidic residues" evidence="8">
    <location>
        <begin position="822"/>
        <end position="832"/>
    </location>
</feature>
<feature type="compositionally biased region" description="Basic and acidic residues" evidence="8">
    <location>
        <begin position="836"/>
        <end position="848"/>
    </location>
</feature>
<feature type="compositionally biased region" description="Polar residues" evidence="8">
    <location>
        <begin position="1105"/>
        <end position="1131"/>
    </location>
</feature>
<feature type="active site" description="Proton acceptor" evidence="3 7">
    <location>
        <position position="173"/>
    </location>
</feature>
<feature type="modified residue" description="N-acetylserine" evidence="1">
    <location>
        <position position="2"/>
    </location>
</feature>
<feature type="modified residue" description="Phosphoserine" evidence="11">
    <location>
        <position position="2"/>
    </location>
</feature>
<feature type="modified residue" description="Phosphoserine" evidence="11">
    <location>
        <position position="16"/>
    </location>
</feature>
<feature type="modified residue" description="Phosphoserine" evidence="1">
    <location>
        <position position="454"/>
    </location>
</feature>
<feature type="modified residue" description="Phosphoserine" evidence="1">
    <location>
        <position position="768"/>
    </location>
</feature>
<feature type="modified residue" description="Phosphothreonine" evidence="1">
    <location>
        <position position="774"/>
    </location>
</feature>
<feature type="modified residue" description="Phosphoserine" evidence="1">
    <location>
        <position position="781"/>
    </location>
</feature>
<feature type="modified residue" description="Phosphothreonine" evidence="1">
    <location>
        <position position="792"/>
    </location>
</feature>
<feature type="modified residue" description="Phosphoserine" evidence="11">
    <location>
        <position position="809"/>
    </location>
</feature>
<feature type="modified residue" description="Phosphoserine" evidence="11">
    <location>
        <position position="824"/>
    </location>
</feature>
<feature type="modified residue" description="Phosphoserine" evidence="11">
    <location>
        <position position="827"/>
    </location>
</feature>
<feature type="modified residue" description="Phosphoserine" evidence="1">
    <location>
        <position position="938"/>
    </location>
</feature>
<feature type="modified residue" description="Omega-N-methylarginine" evidence="2">
    <location>
        <position position="1122"/>
    </location>
</feature>
<feature type="modified residue" description="Phosphoserine" evidence="1">
    <location>
        <position position="1171"/>
    </location>
</feature>
<evidence type="ECO:0000250" key="1">
    <source>
        <dbReference type="UniProtKB" id="O14976"/>
    </source>
</evidence>
<evidence type="ECO:0000250" key="2">
    <source>
        <dbReference type="UniProtKB" id="Q99KY4"/>
    </source>
</evidence>
<evidence type="ECO:0000255" key="3">
    <source>
        <dbReference type="PROSITE-ProRule" id="PRU00159"/>
    </source>
</evidence>
<evidence type="ECO:0000255" key="4">
    <source>
        <dbReference type="PROSITE-ProRule" id="PRU00286"/>
    </source>
</evidence>
<evidence type="ECO:0000255" key="5">
    <source>
        <dbReference type="PROSITE-ProRule" id="PRU00589"/>
    </source>
</evidence>
<evidence type="ECO:0000255" key="6">
    <source>
        <dbReference type="PROSITE-ProRule" id="PRU00590"/>
    </source>
</evidence>
<evidence type="ECO:0000255" key="7">
    <source>
        <dbReference type="PROSITE-ProRule" id="PRU10027"/>
    </source>
</evidence>
<evidence type="ECO:0000256" key="8">
    <source>
        <dbReference type="SAM" id="MobiDB-lite"/>
    </source>
</evidence>
<evidence type="ECO:0000305" key="9"/>
<evidence type="ECO:0000312" key="10">
    <source>
        <dbReference type="RGD" id="621589"/>
    </source>
</evidence>
<evidence type="ECO:0007744" key="11">
    <source>
    </source>
</evidence>
<proteinExistence type="evidence at protein level"/>
<dbReference type="EC" id="2.7.11.1"/>
<dbReference type="EMBL" id="D38560">
    <property type="protein sequence ID" value="BAA18911.1"/>
    <property type="molecule type" value="mRNA"/>
</dbReference>
<dbReference type="PIR" id="T31096">
    <property type="entry name" value="T31096"/>
</dbReference>
<dbReference type="RefSeq" id="NP_112292.1">
    <property type="nucleotide sequence ID" value="NM_031030.2"/>
</dbReference>
<dbReference type="SMR" id="P97874"/>
<dbReference type="BioGRID" id="249559">
    <property type="interactions" value="1"/>
</dbReference>
<dbReference type="FunCoup" id="P97874">
    <property type="interactions" value="2899"/>
</dbReference>
<dbReference type="IntAct" id="P97874">
    <property type="interactions" value="3"/>
</dbReference>
<dbReference type="MINT" id="P97874"/>
<dbReference type="STRING" id="10116.ENSRNOP00000000064"/>
<dbReference type="iPTMnet" id="P97874"/>
<dbReference type="PhosphoSitePlus" id="P97874"/>
<dbReference type="jPOST" id="P97874"/>
<dbReference type="PaxDb" id="10116-ENSRNOP00000000064"/>
<dbReference type="GeneID" id="81659"/>
<dbReference type="KEGG" id="rno:81659"/>
<dbReference type="UCSC" id="RGD:621589">
    <property type="organism name" value="rat"/>
</dbReference>
<dbReference type="AGR" id="RGD:621589"/>
<dbReference type="CTD" id="2580"/>
<dbReference type="RGD" id="621589">
    <property type="gene designation" value="Gak"/>
</dbReference>
<dbReference type="eggNOG" id="KOG0431">
    <property type="taxonomic scope" value="Eukaryota"/>
</dbReference>
<dbReference type="eggNOG" id="KOG1989">
    <property type="taxonomic scope" value="Eukaryota"/>
</dbReference>
<dbReference type="eggNOG" id="KOG2283">
    <property type="taxonomic scope" value="Eukaryota"/>
</dbReference>
<dbReference type="InParanoid" id="P97874"/>
<dbReference type="OrthoDB" id="1717591at2759"/>
<dbReference type="PhylomeDB" id="P97874"/>
<dbReference type="Reactome" id="R-RNO-432722">
    <property type="pathway name" value="Golgi Associated Vesicle Biogenesis"/>
</dbReference>
<dbReference type="Reactome" id="R-RNO-8856828">
    <property type="pathway name" value="Clathrin-mediated endocytosis"/>
</dbReference>
<dbReference type="PRO" id="PR:P97874"/>
<dbReference type="Proteomes" id="UP000002494">
    <property type="component" value="Unplaced"/>
</dbReference>
<dbReference type="GO" id="GO:0030136">
    <property type="term" value="C:clathrin-coated vesicle"/>
    <property type="evidence" value="ECO:0000250"/>
    <property type="project" value="UniProtKB"/>
</dbReference>
<dbReference type="GO" id="GO:0005829">
    <property type="term" value="C:cytosol"/>
    <property type="evidence" value="ECO:0007669"/>
    <property type="project" value="GOC"/>
</dbReference>
<dbReference type="GO" id="GO:0005925">
    <property type="term" value="C:focal adhesion"/>
    <property type="evidence" value="ECO:0007669"/>
    <property type="project" value="UniProtKB-SubCell"/>
</dbReference>
<dbReference type="GO" id="GO:0005794">
    <property type="term" value="C:Golgi apparatus"/>
    <property type="evidence" value="ECO:0000266"/>
    <property type="project" value="RGD"/>
</dbReference>
<dbReference type="GO" id="GO:0043231">
    <property type="term" value="C:intracellular membrane-bounded organelle"/>
    <property type="evidence" value="ECO:0000318"/>
    <property type="project" value="GO_Central"/>
</dbReference>
<dbReference type="GO" id="GO:0048471">
    <property type="term" value="C:perinuclear region of cytoplasm"/>
    <property type="evidence" value="ECO:0007669"/>
    <property type="project" value="UniProtKB-SubCell"/>
</dbReference>
<dbReference type="GO" id="GO:0031982">
    <property type="term" value="C:vesicle"/>
    <property type="evidence" value="ECO:0000266"/>
    <property type="project" value="RGD"/>
</dbReference>
<dbReference type="GO" id="GO:0005524">
    <property type="term" value="F:ATP binding"/>
    <property type="evidence" value="ECO:0007669"/>
    <property type="project" value="UniProtKB-KW"/>
</dbReference>
<dbReference type="GO" id="GO:0030276">
    <property type="term" value="F:clathrin binding"/>
    <property type="evidence" value="ECO:0000318"/>
    <property type="project" value="GO_Central"/>
</dbReference>
<dbReference type="GO" id="GO:0030332">
    <property type="term" value="F:cyclin binding"/>
    <property type="evidence" value="ECO:0000314"/>
    <property type="project" value="RGD"/>
</dbReference>
<dbReference type="GO" id="GO:0106310">
    <property type="term" value="F:protein serine kinase activity"/>
    <property type="evidence" value="ECO:0007669"/>
    <property type="project" value="RHEA"/>
</dbReference>
<dbReference type="GO" id="GO:0004674">
    <property type="term" value="F:protein serine/threonine kinase activity"/>
    <property type="evidence" value="ECO:0007669"/>
    <property type="project" value="UniProtKB-KW"/>
</dbReference>
<dbReference type="GO" id="GO:0048268">
    <property type="term" value="P:clathrin coat assembly"/>
    <property type="evidence" value="ECO:0000266"/>
    <property type="project" value="RGD"/>
</dbReference>
<dbReference type="GO" id="GO:0072318">
    <property type="term" value="P:clathrin coat disassembly"/>
    <property type="evidence" value="ECO:0000266"/>
    <property type="project" value="RGD"/>
</dbReference>
<dbReference type="GO" id="GO:0072583">
    <property type="term" value="P:clathrin-dependent endocytosis"/>
    <property type="evidence" value="ECO:0000250"/>
    <property type="project" value="UniProtKB"/>
</dbReference>
<dbReference type="GO" id="GO:0007029">
    <property type="term" value="P:endoplasmic reticulum organization"/>
    <property type="evidence" value="ECO:0000266"/>
    <property type="project" value="RGD"/>
</dbReference>
<dbReference type="GO" id="GO:0009913">
    <property type="term" value="P:epidermal cell differentiation"/>
    <property type="evidence" value="ECO:0000266"/>
    <property type="project" value="RGD"/>
</dbReference>
<dbReference type="GO" id="GO:0002064">
    <property type="term" value="P:epithelial cell development"/>
    <property type="evidence" value="ECO:0000266"/>
    <property type="project" value="RGD"/>
</dbReference>
<dbReference type="GO" id="GO:0061436">
    <property type="term" value="P:establishment of skin barrier"/>
    <property type="evidence" value="ECO:0000266"/>
    <property type="project" value="RGD"/>
</dbReference>
<dbReference type="GO" id="GO:0048853">
    <property type="term" value="P:forebrain morphogenesis"/>
    <property type="evidence" value="ECO:0000266"/>
    <property type="project" value="RGD"/>
</dbReference>
<dbReference type="GO" id="GO:0007030">
    <property type="term" value="P:Golgi organization"/>
    <property type="evidence" value="ECO:0000266"/>
    <property type="project" value="RGD"/>
</dbReference>
<dbReference type="GO" id="GO:0090160">
    <property type="term" value="P:Golgi to lysosome transport"/>
    <property type="evidence" value="ECO:0000266"/>
    <property type="project" value="RGD"/>
</dbReference>
<dbReference type="GO" id="GO:0046907">
    <property type="term" value="P:intracellular transport"/>
    <property type="evidence" value="ECO:0000250"/>
    <property type="project" value="UniProtKB"/>
</dbReference>
<dbReference type="GO" id="GO:0035622">
    <property type="term" value="P:intrahepatic bile duct development"/>
    <property type="evidence" value="ECO:0000266"/>
    <property type="project" value="RGD"/>
</dbReference>
<dbReference type="GO" id="GO:0030216">
    <property type="term" value="P:keratinocyte differentiation"/>
    <property type="evidence" value="ECO:0000266"/>
    <property type="project" value="RGD"/>
</dbReference>
<dbReference type="GO" id="GO:0010977">
    <property type="term" value="P:negative regulation of neuron projection development"/>
    <property type="evidence" value="ECO:0000266"/>
    <property type="project" value="RGD"/>
</dbReference>
<dbReference type="GO" id="GO:0061351">
    <property type="term" value="P:neural precursor cell proliferation"/>
    <property type="evidence" value="ECO:0000266"/>
    <property type="project" value="RGD"/>
</dbReference>
<dbReference type="GO" id="GO:0060563">
    <property type="term" value="P:neuroepithelial cell differentiation"/>
    <property type="evidence" value="ECO:0000266"/>
    <property type="project" value="RGD"/>
</dbReference>
<dbReference type="GO" id="GO:2000179">
    <property type="term" value="P:positive regulation of neural precursor cell proliferation"/>
    <property type="evidence" value="ECO:0000266"/>
    <property type="project" value="RGD"/>
</dbReference>
<dbReference type="GO" id="GO:0034067">
    <property type="term" value="P:protein localization to Golgi apparatus"/>
    <property type="evidence" value="ECO:0000266"/>
    <property type="project" value="RGD"/>
</dbReference>
<dbReference type="GO" id="GO:0072659">
    <property type="term" value="P:protein localization to plasma membrane"/>
    <property type="evidence" value="ECO:0000266"/>
    <property type="project" value="RGD"/>
</dbReference>
<dbReference type="GO" id="GO:0006898">
    <property type="term" value="P:receptor-mediated endocytosis"/>
    <property type="evidence" value="ECO:0000266"/>
    <property type="project" value="RGD"/>
</dbReference>
<dbReference type="GO" id="GO:1905443">
    <property type="term" value="P:regulation of clathrin coat assembly"/>
    <property type="evidence" value="ECO:0000250"/>
    <property type="project" value="UniProtKB"/>
</dbReference>
<dbReference type="GO" id="GO:0048863">
    <property type="term" value="P:stem cell differentiation"/>
    <property type="evidence" value="ECO:0000266"/>
    <property type="project" value="RGD"/>
</dbReference>
<dbReference type="CDD" id="cd06257">
    <property type="entry name" value="DnaJ"/>
    <property type="match status" value="1"/>
</dbReference>
<dbReference type="CDD" id="cd14564">
    <property type="entry name" value="PTP_GAK"/>
    <property type="match status" value="1"/>
</dbReference>
<dbReference type="CDD" id="cd14036">
    <property type="entry name" value="STKc_GAK"/>
    <property type="match status" value="1"/>
</dbReference>
<dbReference type="FunFam" id="1.10.510.10:FF:000228">
    <property type="entry name" value="cyclin-G-associated kinase isoform X1"/>
    <property type="match status" value="1"/>
</dbReference>
<dbReference type="FunFam" id="2.60.40.1110:FF:000001">
    <property type="entry name" value="cyclin-G-associated kinase isoform X2"/>
    <property type="match status" value="1"/>
</dbReference>
<dbReference type="FunFam" id="1.10.287.110:FF:000002">
    <property type="entry name" value="putative tyrosine-protein phosphatase auxilin isoform X2"/>
    <property type="match status" value="1"/>
</dbReference>
<dbReference type="FunFam" id="3.90.190.10:FF:000008">
    <property type="entry name" value="putative tyrosine-protein phosphatase auxilin isoform X2"/>
    <property type="match status" value="1"/>
</dbReference>
<dbReference type="Gene3D" id="2.60.40.1110">
    <property type="match status" value="1"/>
</dbReference>
<dbReference type="Gene3D" id="1.10.287.110">
    <property type="entry name" value="DnaJ domain"/>
    <property type="match status" value="1"/>
</dbReference>
<dbReference type="Gene3D" id="3.90.190.10">
    <property type="entry name" value="Protein tyrosine phosphatase superfamily"/>
    <property type="match status" value="1"/>
</dbReference>
<dbReference type="Gene3D" id="1.10.510.10">
    <property type="entry name" value="Transferase(Phosphotransferase) domain 1"/>
    <property type="match status" value="1"/>
</dbReference>
<dbReference type="InterPro" id="IPR035892">
    <property type="entry name" value="C2_domain_sf"/>
</dbReference>
<dbReference type="InterPro" id="IPR001623">
    <property type="entry name" value="DnaJ_domain"/>
</dbReference>
<dbReference type="InterPro" id="IPR036869">
    <property type="entry name" value="J_dom_sf"/>
</dbReference>
<dbReference type="InterPro" id="IPR011009">
    <property type="entry name" value="Kinase-like_dom_sf"/>
</dbReference>
<dbReference type="InterPro" id="IPR029021">
    <property type="entry name" value="Prot-tyrosine_phosphatase-like"/>
</dbReference>
<dbReference type="InterPro" id="IPR000719">
    <property type="entry name" value="Prot_kinase_dom"/>
</dbReference>
<dbReference type="InterPro" id="IPR008271">
    <property type="entry name" value="Ser/Thr_kinase_AS"/>
</dbReference>
<dbReference type="InterPro" id="IPR014020">
    <property type="entry name" value="Tensin_C2-dom"/>
</dbReference>
<dbReference type="InterPro" id="IPR029023">
    <property type="entry name" value="Tensin_phosphatase"/>
</dbReference>
<dbReference type="PANTHER" id="PTHR23172">
    <property type="entry name" value="AUXILIN/CYCLIN G-ASSOCIATED KINASE-RELATED"/>
    <property type="match status" value="1"/>
</dbReference>
<dbReference type="PANTHER" id="PTHR23172:SF34">
    <property type="entry name" value="CYCLIN-G-ASSOCIATED KINASE"/>
    <property type="match status" value="1"/>
</dbReference>
<dbReference type="Pfam" id="PF00226">
    <property type="entry name" value="DnaJ"/>
    <property type="match status" value="1"/>
</dbReference>
<dbReference type="Pfam" id="PF00069">
    <property type="entry name" value="Pkinase"/>
    <property type="match status" value="1"/>
</dbReference>
<dbReference type="Pfam" id="PF10409">
    <property type="entry name" value="PTEN_C2"/>
    <property type="match status" value="1"/>
</dbReference>
<dbReference type="SMART" id="SM00271">
    <property type="entry name" value="DnaJ"/>
    <property type="match status" value="1"/>
</dbReference>
<dbReference type="SMART" id="SM01326">
    <property type="entry name" value="PTEN_C2"/>
    <property type="match status" value="1"/>
</dbReference>
<dbReference type="SMART" id="SM00220">
    <property type="entry name" value="S_TKc"/>
    <property type="match status" value="1"/>
</dbReference>
<dbReference type="SUPFAM" id="SSF52799">
    <property type="entry name" value="(Phosphotyrosine protein) phosphatases II"/>
    <property type="match status" value="1"/>
</dbReference>
<dbReference type="SUPFAM" id="SSF49562">
    <property type="entry name" value="C2 domain (Calcium/lipid-binding domain, CaLB)"/>
    <property type="match status" value="1"/>
</dbReference>
<dbReference type="SUPFAM" id="SSF46565">
    <property type="entry name" value="Chaperone J-domain"/>
    <property type="match status" value="1"/>
</dbReference>
<dbReference type="SUPFAM" id="SSF56112">
    <property type="entry name" value="Protein kinase-like (PK-like)"/>
    <property type="match status" value="1"/>
</dbReference>
<dbReference type="PROSITE" id="PS51182">
    <property type="entry name" value="C2_TENSIN"/>
    <property type="match status" value="1"/>
</dbReference>
<dbReference type="PROSITE" id="PS50076">
    <property type="entry name" value="DNAJ_2"/>
    <property type="match status" value="1"/>
</dbReference>
<dbReference type="PROSITE" id="PS51181">
    <property type="entry name" value="PPASE_TENSIN"/>
    <property type="match status" value="1"/>
</dbReference>
<dbReference type="PROSITE" id="PS50011">
    <property type="entry name" value="PROTEIN_KINASE_DOM"/>
    <property type="match status" value="1"/>
</dbReference>
<dbReference type="PROSITE" id="PS00108">
    <property type="entry name" value="PROTEIN_KINASE_ST"/>
    <property type="match status" value="1"/>
</dbReference>
<reference key="1">
    <citation type="journal article" date="1997" name="FEBS Lett.">
        <title>GAK: a cyclin G associated kinase contains a tensin/auxilin-like domain.</title>
        <authorList>
            <person name="Kanaoka Y."/>
            <person name="Kimura S.H."/>
            <person name="Okazaki I."/>
            <person name="Ikeda M."/>
            <person name="Nojima H."/>
        </authorList>
    </citation>
    <scope>NUCLEOTIDE SEQUENCE [MRNA]</scope>
    <source>
        <tissue>Kidney</tissue>
    </source>
</reference>
<reference key="2">
    <citation type="journal article" date="2012" name="Nat. Commun.">
        <title>Quantitative maps of protein phosphorylation sites across 14 different rat organs and tissues.</title>
        <authorList>
            <person name="Lundby A."/>
            <person name="Secher A."/>
            <person name="Lage K."/>
            <person name="Nordsborg N.B."/>
            <person name="Dmytriyev A."/>
            <person name="Lundby C."/>
            <person name="Olsen J.V."/>
        </authorList>
    </citation>
    <scope>PHOSPHORYLATION [LARGE SCALE ANALYSIS] AT SER-2; SER-16; SER-809; SER-824 AND SER-827</scope>
    <scope>IDENTIFICATION BY MASS SPECTROMETRY [LARGE SCALE ANALYSIS]</scope>
</reference>
<accession>P97874</accession>
<keyword id="KW-0007">Acetylation</keyword>
<keyword id="KW-0067">ATP-binding</keyword>
<keyword id="KW-0131">Cell cycle</keyword>
<keyword id="KW-0965">Cell junction</keyword>
<keyword id="KW-0963">Cytoplasm</keyword>
<keyword id="KW-0968">Cytoplasmic vesicle</keyword>
<keyword id="KW-0333">Golgi apparatus</keyword>
<keyword id="KW-0418">Kinase</keyword>
<keyword id="KW-0488">Methylation</keyword>
<keyword id="KW-0547">Nucleotide-binding</keyword>
<keyword id="KW-0597">Phosphoprotein</keyword>
<keyword id="KW-1185">Reference proteome</keyword>
<keyword id="KW-0723">Serine/threonine-protein kinase</keyword>
<keyword id="KW-0808">Transferase</keyword>